<sequence length="337" mass="38311">MSQSYEAGNANMGQGEDDEFDGYFEDFDNDIMPNSNNGQRVGTNAGLSFNDEVNVNDDDFLDIYNMSPRERLMHNIRKNVQKLQFYFYSLRLWQQIIIVLLGIMLMIMGILLLVFHNAILHKVVVTSNDLREKMSTHFILMVLIFFVAFPPMIGYSLLSTTTGLIYGVSFEGWVTLALGSVTGSIASFVVFKTILHSRAEKLVHLNRRFEALASILQENNSYWILALLRLCPFPYSLTNGAIAGVYGISVRNFSIANIITTPKLFIYLFIGSRVKSLAESESTGSRVFDLVSIIITLLILSLTAWLLYFKTKKRYLELQNRDRQVSTDQLPELSFEV</sequence>
<feature type="chain" id="PRO_0000203226" description="Golgi apparatus membrane protein TVP38">
    <location>
        <begin position="1"/>
        <end position="337"/>
    </location>
</feature>
<feature type="topological domain" description="Lumenal" evidence="1">
    <location>
        <begin position="1"/>
        <end position="95"/>
    </location>
</feature>
<feature type="transmembrane region" description="Helical" evidence="1">
    <location>
        <begin position="96"/>
        <end position="116"/>
    </location>
</feature>
<feature type="topological domain" description="Cytoplasmic" evidence="1">
    <location>
        <begin position="117"/>
        <end position="137"/>
    </location>
</feature>
<feature type="transmembrane region" description="Helical" evidence="1">
    <location>
        <begin position="138"/>
        <end position="158"/>
    </location>
</feature>
<feature type="topological domain" description="Lumenal" evidence="1">
    <location>
        <begin position="159"/>
        <end position="169"/>
    </location>
</feature>
<feature type="transmembrane region" description="Helical" evidence="1">
    <location>
        <begin position="170"/>
        <end position="190"/>
    </location>
</feature>
<feature type="topological domain" description="Cytoplasmic" evidence="1">
    <location>
        <begin position="191"/>
        <end position="251"/>
    </location>
</feature>
<feature type="transmembrane region" description="Helical" evidence="1">
    <location>
        <begin position="252"/>
        <end position="272"/>
    </location>
</feature>
<feature type="topological domain" description="Lumenal" evidence="1">
    <location>
        <begin position="273"/>
        <end position="286"/>
    </location>
</feature>
<feature type="transmembrane region" description="Helical" evidence="1">
    <location>
        <begin position="287"/>
        <end position="307"/>
    </location>
</feature>
<feature type="topological domain" description="Cytoplasmic" evidence="1">
    <location>
        <begin position="308"/>
        <end position="337"/>
    </location>
</feature>
<feature type="region of interest" description="VTT domain" evidence="7">
    <location>
        <begin position="163"/>
        <end position="274"/>
    </location>
</feature>
<protein>
    <recommendedName>
        <fullName>Golgi apparatus membrane protein TVP38</fullName>
    </recommendedName>
    <alternativeName>
        <fullName>TLG2-vesicle protein of 38 kDa</fullName>
    </alternativeName>
</protein>
<keyword id="KW-0333">Golgi apparatus</keyword>
<keyword id="KW-0472">Membrane</keyword>
<keyword id="KW-1185">Reference proteome</keyword>
<keyword id="KW-0812">Transmembrane</keyword>
<keyword id="KW-1133">Transmembrane helix</keyword>
<name>TVP38_YEAST</name>
<reference key="1">
    <citation type="journal article" date="1994" name="Yeast">
        <title>The complete sequence of an 18,002 bp segment of Saccharomyces cerevisiae chromosome XI contains the HBS1, MRP-L20 and PRP16 genes, and six new open reading frames.</title>
        <authorList>
            <person name="Garcia-Cantalejo J.M."/>
            <person name="Baladron V."/>
            <person name="Esteban P.F."/>
            <person name="Santos M.A."/>
            <person name="Bou G."/>
            <person name="Remacha M.A."/>
            <person name="Revuelta J.L."/>
            <person name="Ballesta J.P.G."/>
            <person name="Jimenez A."/>
            <person name="del Rey F."/>
        </authorList>
    </citation>
    <scope>NUCLEOTIDE SEQUENCE [GENOMIC DNA]</scope>
</reference>
<reference key="2">
    <citation type="journal article" date="1994" name="Nature">
        <title>Complete DNA sequence of yeast chromosome XI.</title>
        <authorList>
            <person name="Dujon B."/>
            <person name="Alexandraki D."/>
            <person name="Andre B."/>
            <person name="Ansorge W."/>
            <person name="Baladron V."/>
            <person name="Ballesta J.P.G."/>
            <person name="Banrevi A."/>
            <person name="Bolle P.-A."/>
            <person name="Bolotin-Fukuhara M."/>
            <person name="Bossier P."/>
            <person name="Bou G."/>
            <person name="Boyer J."/>
            <person name="Buitrago M.J."/>
            <person name="Cheret G."/>
            <person name="Colleaux L."/>
            <person name="Daignan-Fornier B."/>
            <person name="del Rey F."/>
            <person name="Dion C."/>
            <person name="Domdey H."/>
            <person name="Duesterhoeft A."/>
            <person name="Duesterhus S."/>
            <person name="Entian K.-D."/>
            <person name="Erfle H."/>
            <person name="Esteban P.F."/>
            <person name="Feldmann H."/>
            <person name="Fernandes L."/>
            <person name="Fobo G.M."/>
            <person name="Fritz C."/>
            <person name="Fukuhara H."/>
            <person name="Gabel C."/>
            <person name="Gaillon L."/>
            <person name="Garcia-Cantalejo J.M."/>
            <person name="Garcia-Ramirez J.J."/>
            <person name="Gent M.E."/>
            <person name="Ghazvini M."/>
            <person name="Goffeau A."/>
            <person name="Gonzalez A."/>
            <person name="Grothues D."/>
            <person name="Guerreiro P."/>
            <person name="Hegemann J.H."/>
            <person name="Hewitt N."/>
            <person name="Hilger F."/>
            <person name="Hollenberg C.P."/>
            <person name="Horaitis O."/>
            <person name="Indge K.J."/>
            <person name="Jacquier A."/>
            <person name="James C.M."/>
            <person name="Jauniaux J.-C."/>
            <person name="Jimenez A."/>
            <person name="Keuchel H."/>
            <person name="Kirchrath L."/>
            <person name="Kleine K."/>
            <person name="Koetter P."/>
            <person name="Legrain P."/>
            <person name="Liebl S."/>
            <person name="Louis E.J."/>
            <person name="Maia e Silva A."/>
            <person name="Marck C."/>
            <person name="Monnier A.-L."/>
            <person name="Moestl D."/>
            <person name="Mueller S."/>
            <person name="Obermaier B."/>
            <person name="Oliver S.G."/>
            <person name="Pallier C."/>
            <person name="Pascolo S."/>
            <person name="Pfeiffer F."/>
            <person name="Philippsen P."/>
            <person name="Planta R.J."/>
            <person name="Pohl F.M."/>
            <person name="Pohl T.M."/>
            <person name="Poehlmann R."/>
            <person name="Portetelle D."/>
            <person name="Purnelle B."/>
            <person name="Puzos V."/>
            <person name="Ramezani Rad M."/>
            <person name="Rasmussen S.W."/>
            <person name="Remacha M.A."/>
            <person name="Revuelta J.L."/>
            <person name="Richard G.-F."/>
            <person name="Rieger M."/>
            <person name="Rodrigues-Pousada C."/>
            <person name="Rose M."/>
            <person name="Rupp T."/>
            <person name="Santos M.A."/>
            <person name="Schwager C."/>
            <person name="Sensen C."/>
            <person name="Skala J."/>
            <person name="Soares H."/>
            <person name="Sor F."/>
            <person name="Stegemann J."/>
            <person name="Tettelin H."/>
            <person name="Thierry A."/>
            <person name="Tzermia M."/>
            <person name="Urrestarazu L.A."/>
            <person name="van Dyck L."/>
            <person name="van Vliet-Reedijk J.C."/>
            <person name="Valens M."/>
            <person name="Vandenbol M."/>
            <person name="Vilela C."/>
            <person name="Vissers S."/>
            <person name="von Wettstein D."/>
            <person name="Voss H."/>
            <person name="Wiemann S."/>
            <person name="Xu G."/>
            <person name="Zimmermann J."/>
            <person name="Haasemann M."/>
            <person name="Becker I."/>
            <person name="Mewes H.-W."/>
        </authorList>
    </citation>
    <scope>NUCLEOTIDE SEQUENCE [LARGE SCALE GENOMIC DNA]</scope>
    <source>
        <strain>ATCC 204508 / S288c</strain>
    </source>
</reference>
<reference key="3">
    <citation type="journal article" date="2014" name="G3 (Bethesda)">
        <title>The reference genome sequence of Saccharomyces cerevisiae: Then and now.</title>
        <authorList>
            <person name="Engel S.R."/>
            <person name="Dietrich F.S."/>
            <person name="Fisk D.G."/>
            <person name="Binkley G."/>
            <person name="Balakrishnan R."/>
            <person name="Costanzo M.C."/>
            <person name="Dwight S.S."/>
            <person name="Hitz B.C."/>
            <person name="Karra K."/>
            <person name="Nash R.S."/>
            <person name="Weng S."/>
            <person name="Wong E.D."/>
            <person name="Lloyd P."/>
            <person name="Skrzypek M.S."/>
            <person name="Miyasato S.R."/>
            <person name="Simison M."/>
            <person name="Cherry J.M."/>
        </authorList>
    </citation>
    <scope>GENOME REANNOTATION</scope>
    <source>
        <strain>ATCC 204508 / S288c</strain>
    </source>
</reference>
<reference key="4">
    <citation type="journal article" date="2007" name="Genome Res.">
        <title>Approaching a complete repository of sequence-verified protein-encoding clones for Saccharomyces cerevisiae.</title>
        <authorList>
            <person name="Hu Y."/>
            <person name="Rolfs A."/>
            <person name="Bhullar B."/>
            <person name="Murthy T.V.S."/>
            <person name="Zhu C."/>
            <person name="Berger M.F."/>
            <person name="Camargo A.A."/>
            <person name="Kelley F."/>
            <person name="McCarron S."/>
            <person name="Jepson D."/>
            <person name="Richardson A."/>
            <person name="Raphael J."/>
            <person name="Moreira D."/>
            <person name="Taycher E."/>
            <person name="Zuo D."/>
            <person name="Mohr S."/>
            <person name="Kane M.F."/>
            <person name="Williamson J."/>
            <person name="Simpson A.J.G."/>
            <person name="Bulyk M.L."/>
            <person name="Harlow E."/>
            <person name="Marsischky G."/>
            <person name="Kolodner R.D."/>
            <person name="LaBaer J."/>
        </authorList>
    </citation>
    <scope>NUCLEOTIDE SEQUENCE [GENOMIC DNA]</scope>
    <source>
        <strain>ATCC 204508 / S288c</strain>
    </source>
</reference>
<reference key="5">
    <citation type="journal article" date="2003" name="Nature">
        <title>Global analysis of protein localization in budding yeast.</title>
        <authorList>
            <person name="Huh W.-K."/>
            <person name="Falvo J.V."/>
            <person name="Gerke L.C."/>
            <person name="Carroll A.S."/>
            <person name="Howson R.W."/>
            <person name="Weissman J.S."/>
            <person name="O'Shea E.K."/>
        </authorList>
    </citation>
    <scope>SUBCELLULAR LOCATION [LARGE SCALE ANALYSIS]</scope>
</reference>
<reference key="6">
    <citation type="journal article" date="2003" name="Nature">
        <title>Global analysis of protein expression in yeast.</title>
        <authorList>
            <person name="Ghaemmaghami S."/>
            <person name="Huh W.-K."/>
            <person name="Bower K."/>
            <person name="Howson R.W."/>
            <person name="Belle A."/>
            <person name="Dephoure N."/>
            <person name="O'Shea E.K."/>
            <person name="Weissman J.S."/>
        </authorList>
    </citation>
    <scope>LEVEL OF PROTEIN EXPRESSION [LARGE SCALE ANALYSIS]</scope>
</reference>
<reference key="7">
    <citation type="journal article" date="2005" name="Mol. Cell. Biol.">
        <title>Immunoisolation of the yeast Golgi subcompartments and characterization of a novel membrane protein, Svp26, discovered in the Sed5-containing compartments.</title>
        <authorList>
            <person name="Inadome H."/>
            <person name="Noda Y."/>
            <person name="Adachi H."/>
            <person name="Yoda K."/>
        </authorList>
    </citation>
    <scope>SUBCELLULAR LOCATION</scope>
    <scope>IDENTIFICATION BY MASS SPECTROMETRY</scope>
</reference>
<reference key="8">
    <citation type="journal article" date="2006" name="Proc. Natl. Acad. Sci. U.S.A.">
        <title>A global topology map of the Saccharomyces cerevisiae membrane proteome.</title>
        <authorList>
            <person name="Kim H."/>
            <person name="Melen K."/>
            <person name="Oesterberg M."/>
            <person name="von Heijne G."/>
        </authorList>
    </citation>
    <scope>TOPOLOGY [LARGE SCALE ANALYSIS]</scope>
    <source>
        <strain>ATCC 208353 / W303-1A</strain>
    </source>
</reference>
<reference key="9">
    <citation type="journal article" date="2007" name="Exp. Cell Res.">
        <title>Tvp38, Tvp23, Tvp18 and Tvp15: novel membrane proteins in the Tlg2-containing Golgi/endosome compartments of Saccharomyces cerevisiae.</title>
        <authorList>
            <person name="Inadome H."/>
            <person name="Noda Y."/>
            <person name="Kamimura Y."/>
            <person name="Adachi H."/>
            <person name="Yoda K."/>
        </authorList>
    </citation>
    <scope>FUNCTION</scope>
    <scope>SUBCELLULAR LOCATION</scope>
    <scope>INTERACTION WITH YIP5</scope>
</reference>
<reference key="10">
    <citation type="journal article" date="2008" name="Mol. Cell. Proteomics">
        <title>A multidimensional chromatography technology for in-depth phosphoproteome analysis.</title>
        <authorList>
            <person name="Albuquerque C.P."/>
            <person name="Smolka M.B."/>
            <person name="Payne S.H."/>
            <person name="Bafna V."/>
            <person name="Eng J."/>
            <person name="Zhou H."/>
        </authorList>
    </citation>
    <scope>IDENTIFICATION BY MASS SPECTROMETRY [LARGE SCALE ANALYSIS]</scope>
</reference>
<reference key="11">
    <citation type="journal article" date="2009" name="Science">
        <title>Global analysis of Cdk1 substrate phosphorylation sites provides insights into evolution.</title>
        <authorList>
            <person name="Holt L.J."/>
            <person name="Tuch B.B."/>
            <person name="Villen J."/>
            <person name="Johnson A.D."/>
            <person name="Gygi S.P."/>
            <person name="Morgan D.O."/>
        </authorList>
    </citation>
    <scope>IDENTIFICATION BY MASS SPECTROMETRY [LARGE SCALE ANALYSIS]</scope>
</reference>
<reference key="12">
    <citation type="journal article" date="2018" name="J. Cell Biol.">
        <title>Genome-wide CRISPR screen identifies TMEM41B as a gene required for autophagosome formation.</title>
        <authorList>
            <person name="Morita K."/>
            <person name="Hama Y."/>
            <person name="Izume T."/>
            <person name="Tamura N."/>
            <person name="Ueno T."/>
            <person name="Yamashita Y."/>
            <person name="Sakamaki Y."/>
            <person name="Mimura K."/>
            <person name="Morishita H."/>
            <person name="Shihoya W."/>
            <person name="Nureki O."/>
            <person name="Mano H."/>
            <person name="Mizushima N."/>
        </authorList>
    </citation>
    <scope>REGION VTT DOMAIN</scope>
</reference>
<gene>
    <name type="primary">TVP38</name>
    <name type="ordered locus">YKR088C</name>
    <name type="ORF">YKR408</name>
</gene>
<accession>P36164</accession>
<accession>D6VXE8</accession>
<dbReference type="EMBL" id="Z27116">
    <property type="protein sequence ID" value="CAA81639.1"/>
    <property type="molecule type" value="Genomic_DNA"/>
</dbReference>
<dbReference type="EMBL" id="Z28313">
    <property type="protein sequence ID" value="CAA82167.1"/>
    <property type="molecule type" value="Genomic_DNA"/>
</dbReference>
<dbReference type="EMBL" id="AY557916">
    <property type="protein sequence ID" value="AAS56242.1"/>
    <property type="molecule type" value="Genomic_DNA"/>
</dbReference>
<dbReference type="EMBL" id="BK006944">
    <property type="protein sequence ID" value="DAA09238.1"/>
    <property type="molecule type" value="Genomic_DNA"/>
</dbReference>
<dbReference type="PIR" id="S38166">
    <property type="entry name" value="S38166"/>
</dbReference>
<dbReference type="RefSeq" id="NP_013014.3">
    <property type="nucleotide sequence ID" value="NM_001179878.3"/>
</dbReference>
<dbReference type="SMR" id="P36164"/>
<dbReference type="BioGRID" id="34219">
    <property type="interactions" value="112"/>
</dbReference>
<dbReference type="DIP" id="DIP-5167N"/>
<dbReference type="FunCoup" id="P36164">
    <property type="interactions" value="178"/>
</dbReference>
<dbReference type="IntAct" id="P36164">
    <property type="interactions" value="6"/>
</dbReference>
<dbReference type="MINT" id="P36164"/>
<dbReference type="STRING" id="4932.YKR088C"/>
<dbReference type="iPTMnet" id="P36164"/>
<dbReference type="PaxDb" id="4932-YKR088C"/>
<dbReference type="PeptideAtlas" id="P36164"/>
<dbReference type="EnsemblFungi" id="YKR088C_mRNA">
    <property type="protein sequence ID" value="YKR088C"/>
    <property type="gene ID" value="YKR088C"/>
</dbReference>
<dbReference type="GeneID" id="853963"/>
<dbReference type="KEGG" id="sce:YKR088C"/>
<dbReference type="AGR" id="SGD:S000001796"/>
<dbReference type="SGD" id="S000001796">
    <property type="gene designation" value="TVP38"/>
</dbReference>
<dbReference type="VEuPathDB" id="FungiDB:YKR088C"/>
<dbReference type="eggNOG" id="KOG3140">
    <property type="taxonomic scope" value="Eukaryota"/>
</dbReference>
<dbReference type="GeneTree" id="ENSGT00390000007813"/>
<dbReference type="HOGENOM" id="CLU_041954_1_1_1"/>
<dbReference type="InParanoid" id="P36164"/>
<dbReference type="OMA" id="KWQALET"/>
<dbReference type="OrthoDB" id="166803at2759"/>
<dbReference type="BioCyc" id="YEAST:G3O-32051-MONOMER"/>
<dbReference type="BioGRID-ORCS" id="853963">
    <property type="hits" value="9 hits in 10 CRISPR screens"/>
</dbReference>
<dbReference type="PRO" id="PR:P36164"/>
<dbReference type="Proteomes" id="UP000002311">
    <property type="component" value="Chromosome XI"/>
</dbReference>
<dbReference type="RNAct" id="P36164">
    <property type="molecule type" value="protein"/>
</dbReference>
<dbReference type="GO" id="GO:0005737">
    <property type="term" value="C:cytoplasm"/>
    <property type="evidence" value="ECO:0007005"/>
    <property type="project" value="SGD"/>
</dbReference>
<dbReference type="GO" id="GO:0000139">
    <property type="term" value="C:Golgi membrane"/>
    <property type="evidence" value="ECO:0000314"/>
    <property type="project" value="SGD"/>
</dbReference>
<dbReference type="GO" id="GO:0000022">
    <property type="term" value="P:mitotic spindle elongation"/>
    <property type="evidence" value="ECO:0000315"/>
    <property type="project" value="SGD"/>
</dbReference>
<dbReference type="GO" id="GO:0016192">
    <property type="term" value="P:vesicle-mediated transport"/>
    <property type="evidence" value="ECO:0000316"/>
    <property type="project" value="SGD"/>
</dbReference>
<dbReference type="InterPro" id="IPR051076">
    <property type="entry name" value="Golgi_membrane_TVP38/TMEM64"/>
</dbReference>
<dbReference type="InterPro" id="IPR032816">
    <property type="entry name" value="VTT_dom"/>
</dbReference>
<dbReference type="PANTHER" id="PTHR47549:SF1">
    <property type="entry name" value="GOLGI APPARATUS MEMBRANE PROTEIN TVP38"/>
    <property type="match status" value="1"/>
</dbReference>
<dbReference type="PANTHER" id="PTHR47549">
    <property type="entry name" value="GOLGI APPARATUS MEMBRANE PROTEIN TVP38-RELATED"/>
    <property type="match status" value="1"/>
</dbReference>
<dbReference type="Pfam" id="PF09335">
    <property type="entry name" value="VTT_dom"/>
    <property type="match status" value="1"/>
</dbReference>
<comment type="function">
    <text evidence="5">Golgi membrane protein involved in vesicular trafficking and spindle migration.</text>
</comment>
<comment type="subunit">
    <text evidence="5">Interacts with YIP5.</text>
</comment>
<comment type="interaction">
    <interactant intactId="EBI-26527">
        <id>P36164</id>
    </interactant>
    <interactant intactId="EBI-9653">
        <id>P09620</id>
        <label>KEX1</label>
    </interactant>
    <organismsDiffer>false</organismsDiffer>
    <experiments>2</experiments>
</comment>
<comment type="subcellular location">
    <subcellularLocation>
        <location evidence="2 4 5">Golgi apparatus membrane</location>
        <topology evidence="2 4 5">Multi-pass membrane protein</topology>
    </subcellularLocation>
</comment>
<comment type="domain">
    <text evidence="7">The VTT domain was previously called the SNARE-assoc domain. As there is no evidence that this domain associates with SNARE proteins, it was renamed as VMP1, TMEM41, and TVP38 (VTT) domain.</text>
</comment>
<comment type="miscellaneous">
    <text evidence="3">Present with 11300 molecules/cell in log phase SD medium.</text>
</comment>
<comment type="similarity">
    <text evidence="6">Belongs to the TVP38/TMEM64 family.</text>
</comment>
<organism>
    <name type="scientific">Saccharomyces cerevisiae (strain ATCC 204508 / S288c)</name>
    <name type="common">Baker's yeast</name>
    <dbReference type="NCBI Taxonomy" id="559292"/>
    <lineage>
        <taxon>Eukaryota</taxon>
        <taxon>Fungi</taxon>
        <taxon>Dikarya</taxon>
        <taxon>Ascomycota</taxon>
        <taxon>Saccharomycotina</taxon>
        <taxon>Saccharomycetes</taxon>
        <taxon>Saccharomycetales</taxon>
        <taxon>Saccharomycetaceae</taxon>
        <taxon>Saccharomyces</taxon>
    </lineage>
</organism>
<proteinExistence type="evidence at protein level"/>
<evidence type="ECO:0000255" key="1"/>
<evidence type="ECO:0000269" key="2">
    <source>
    </source>
</evidence>
<evidence type="ECO:0000269" key="3">
    <source>
    </source>
</evidence>
<evidence type="ECO:0000269" key="4">
    <source>
    </source>
</evidence>
<evidence type="ECO:0000269" key="5">
    <source>
    </source>
</evidence>
<evidence type="ECO:0000305" key="6"/>
<evidence type="ECO:0000305" key="7">
    <source>
    </source>
</evidence>